<proteinExistence type="inferred from homology"/>
<dbReference type="EMBL" id="DP000009">
    <property type="protein sequence ID" value="ABF98569.1"/>
    <property type="molecule type" value="Genomic_DNA"/>
</dbReference>
<dbReference type="EMBL" id="AP008209">
    <property type="protein sequence ID" value="BAH92347.1"/>
    <property type="molecule type" value="Genomic_DNA"/>
</dbReference>
<dbReference type="EMBL" id="AP014959">
    <property type="protein sequence ID" value="BAS86098.1"/>
    <property type="molecule type" value="Genomic_DNA"/>
</dbReference>
<dbReference type="EMBL" id="CM000140">
    <property type="protein sequence ID" value="EAZ28384.1"/>
    <property type="molecule type" value="Genomic_DNA"/>
</dbReference>
<dbReference type="RefSeq" id="XP_015630147.1">
    <property type="nucleotide sequence ID" value="XM_015774661.1"/>
</dbReference>
<dbReference type="SMR" id="Q10DV5"/>
<dbReference type="FunCoup" id="Q10DV5">
    <property type="interactions" value="15"/>
</dbReference>
<dbReference type="PaxDb" id="39947-Q10DV5"/>
<dbReference type="EnsemblPlants" id="Os03t0718500-00">
    <property type="protein sequence ID" value="Os03t0718500-00"/>
    <property type="gene ID" value="Os03g0718500"/>
</dbReference>
<dbReference type="Gramene" id="Os03t0718500-00">
    <property type="protein sequence ID" value="Os03t0718500-00"/>
    <property type="gene ID" value="Os03g0718500"/>
</dbReference>
<dbReference type="KEGG" id="dosa:Os03g0718500"/>
<dbReference type="eggNOG" id="ENOG502RZ78">
    <property type="taxonomic scope" value="Eukaryota"/>
</dbReference>
<dbReference type="HOGENOM" id="CLU_039237_2_2_1"/>
<dbReference type="InParanoid" id="Q10DV5"/>
<dbReference type="OMA" id="MHHMAIT"/>
<dbReference type="OrthoDB" id="1884189at2759"/>
<dbReference type="Proteomes" id="UP000000763">
    <property type="component" value="Chromosome 3"/>
</dbReference>
<dbReference type="Proteomes" id="UP000007752">
    <property type="component" value="Chromosome 3"/>
</dbReference>
<dbReference type="Proteomes" id="UP000059680">
    <property type="component" value="Chromosome 3"/>
</dbReference>
<dbReference type="GO" id="GO:0005634">
    <property type="term" value="C:nucleus"/>
    <property type="evidence" value="ECO:0000318"/>
    <property type="project" value="GO_Central"/>
</dbReference>
<dbReference type="GO" id="GO:0003700">
    <property type="term" value="F:DNA-binding transcription factor activity"/>
    <property type="evidence" value="ECO:0000318"/>
    <property type="project" value="GO_Central"/>
</dbReference>
<dbReference type="GO" id="GO:0000976">
    <property type="term" value="F:transcription cis-regulatory region binding"/>
    <property type="evidence" value="ECO:0000318"/>
    <property type="project" value="GO_Central"/>
</dbReference>
<dbReference type="GO" id="GO:0008270">
    <property type="term" value="F:zinc ion binding"/>
    <property type="evidence" value="ECO:0007669"/>
    <property type="project" value="UniProtKB-KW"/>
</dbReference>
<dbReference type="GO" id="GO:0006355">
    <property type="term" value="P:regulation of DNA-templated transcription"/>
    <property type="evidence" value="ECO:0000318"/>
    <property type="project" value="GO_Central"/>
</dbReference>
<dbReference type="Gene3D" id="1.10.10.60">
    <property type="entry name" value="Homeodomain-like"/>
    <property type="match status" value="1"/>
</dbReference>
<dbReference type="InterPro" id="IPR009057">
    <property type="entry name" value="Homeodomain-like_sf"/>
</dbReference>
<dbReference type="InterPro" id="IPR006455">
    <property type="entry name" value="Homeodomain_ZF_HD"/>
</dbReference>
<dbReference type="InterPro" id="IPR006456">
    <property type="entry name" value="ZF_HD_homeobox_Cys/His_dimer"/>
</dbReference>
<dbReference type="NCBIfam" id="TIGR01565">
    <property type="entry name" value="homeo_ZF_HD"/>
    <property type="match status" value="1"/>
</dbReference>
<dbReference type="NCBIfam" id="TIGR01566">
    <property type="entry name" value="ZF_HD_prot_N"/>
    <property type="match status" value="1"/>
</dbReference>
<dbReference type="PANTHER" id="PTHR31948:SF16">
    <property type="entry name" value="ZINC-FINGER HOMEODOMAIN PROTEIN 11"/>
    <property type="match status" value="1"/>
</dbReference>
<dbReference type="PANTHER" id="PTHR31948">
    <property type="entry name" value="ZINC-FINGER HOMEODOMAIN PROTEIN 2"/>
    <property type="match status" value="1"/>
</dbReference>
<dbReference type="Pfam" id="PF04770">
    <property type="entry name" value="ZF-HD_dimer"/>
    <property type="match status" value="1"/>
</dbReference>
<dbReference type="SUPFAM" id="SSF46689">
    <property type="entry name" value="Homeodomain-like"/>
    <property type="match status" value="1"/>
</dbReference>
<dbReference type="PROSITE" id="PS51523">
    <property type="entry name" value="ZF_HD_DIMER"/>
    <property type="match status" value="1"/>
</dbReference>
<accession>Q10DV5</accession>
<accession>A0A0P0W2X6</accession>
<comment type="function">
    <text evidence="1">Putative transcription factor.</text>
</comment>
<comment type="subunit">
    <text evidence="1">Homo- and heterodimer with other ZFHD proteins.</text>
</comment>
<comment type="subcellular location">
    <subcellularLocation>
        <location evidence="1">Nucleus</location>
    </subcellularLocation>
</comment>
<comment type="domain">
    <text>The homeodomain differs form the typical one by having namely 4 instead of 3 extra amino acids inserted in the loop between helix 1 and helix 2.</text>
</comment>
<organism>
    <name type="scientific">Oryza sativa subsp. japonica</name>
    <name type="common">Rice</name>
    <dbReference type="NCBI Taxonomy" id="39947"/>
    <lineage>
        <taxon>Eukaryota</taxon>
        <taxon>Viridiplantae</taxon>
        <taxon>Streptophyta</taxon>
        <taxon>Embryophyta</taxon>
        <taxon>Tracheophyta</taxon>
        <taxon>Spermatophyta</taxon>
        <taxon>Magnoliopsida</taxon>
        <taxon>Liliopsida</taxon>
        <taxon>Poales</taxon>
        <taxon>Poaceae</taxon>
        <taxon>BOP clade</taxon>
        <taxon>Oryzoideae</taxon>
        <taxon>Oryzeae</taxon>
        <taxon>Oryzinae</taxon>
        <taxon>Oryza</taxon>
        <taxon>Oryza sativa</taxon>
    </lineage>
</organism>
<feature type="chain" id="PRO_0000426049" description="Zinc-finger homeodomain protein 11">
    <location>
        <begin position="1"/>
        <end position="238"/>
    </location>
</feature>
<feature type="zinc finger region" description="ZF-HD dimerization-type; degenerate" evidence="2">
    <location>
        <begin position="12"/>
        <end position="59"/>
    </location>
</feature>
<feature type="DNA-binding region" description="Homeobox">
    <location>
        <begin position="119"/>
        <end position="188"/>
    </location>
</feature>
<feature type="region of interest" description="Disordered" evidence="3">
    <location>
        <begin position="183"/>
        <end position="238"/>
    </location>
</feature>
<feature type="compositionally biased region" description="Gly residues" evidence="3">
    <location>
        <begin position="183"/>
        <end position="200"/>
    </location>
</feature>
<feature type="site" description="Required for DNA-binding" evidence="1">
    <location>
        <position position="177"/>
    </location>
</feature>
<name>ZHD11_ORYSJ</name>
<gene>
    <name type="primary">ZHD11</name>
    <name type="ordered locus">Os03g0718500</name>
    <name type="ordered locus">LOC_Os03g50920</name>
    <name type="ORF">OsJ_12364</name>
</gene>
<sequence length="238" mass="24295">MEQQQERPREVYRECMRNHAAKLGTYANDGCCEYTPDDGHPAGLLCAACGCHRNFHRKDFLDGRATAAAGGAGGAGVGVAPMLPAPGGGGPPGYMHMAAMGGAVGGGGGVDGGGGSGGRRRTRTKFTEEQKARMLRFAERLGWRMPKREPGRAPGDDEVARFCREIGVNRQVFKVWMHNHKAGGGGGGGGSGGPGAGGGAQTSSSTTRGGGDVGVGLSPAMGGDGEDDEEVRGSEMCM</sequence>
<reference key="1">
    <citation type="journal article" date="2005" name="Genome Res.">
        <title>Sequence, annotation, and analysis of synteny between rice chromosome 3 and diverged grass species.</title>
        <authorList>
            <consortium name="The rice chromosome 3 sequencing consortium"/>
            <person name="Buell C.R."/>
            <person name="Yuan Q."/>
            <person name="Ouyang S."/>
            <person name="Liu J."/>
            <person name="Zhu W."/>
            <person name="Wang A."/>
            <person name="Maiti R."/>
            <person name="Haas B."/>
            <person name="Wortman J."/>
            <person name="Pertea M."/>
            <person name="Jones K.M."/>
            <person name="Kim M."/>
            <person name="Overton L."/>
            <person name="Tsitrin T."/>
            <person name="Fadrosh D."/>
            <person name="Bera J."/>
            <person name="Weaver B."/>
            <person name="Jin S."/>
            <person name="Johri S."/>
            <person name="Reardon M."/>
            <person name="Webb K."/>
            <person name="Hill J."/>
            <person name="Moffat K."/>
            <person name="Tallon L."/>
            <person name="Van Aken S."/>
            <person name="Lewis M."/>
            <person name="Utterback T."/>
            <person name="Feldblyum T."/>
            <person name="Zismann V."/>
            <person name="Iobst S."/>
            <person name="Hsiao J."/>
            <person name="de Vazeille A.R."/>
            <person name="Salzberg S.L."/>
            <person name="White O."/>
            <person name="Fraser C.M."/>
            <person name="Yu Y."/>
            <person name="Kim H."/>
            <person name="Rambo T."/>
            <person name="Currie J."/>
            <person name="Collura K."/>
            <person name="Kernodle-Thompson S."/>
            <person name="Wei F."/>
            <person name="Kudrna K."/>
            <person name="Ammiraju J.S.S."/>
            <person name="Luo M."/>
            <person name="Goicoechea J.L."/>
            <person name="Wing R.A."/>
            <person name="Henry D."/>
            <person name="Oates R."/>
            <person name="Palmer M."/>
            <person name="Pries G."/>
            <person name="Saski C."/>
            <person name="Simmons J."/>
            <person name="Soderlund C."/>
            <person name="Nelson W."/>
            <person name="de la Bastide M."/>
            <person name="Spiegel L."/>
            <person name="Nascimento L."/>
            <person name="Huang E."/>
            <person name="Preston R."/>
            <person name="Zutavern T."/>
            <person name="Palmer L."/>
            <person name="O'Shaughnessy A."/>
            <person name="Dike S."/>
            <person name="McCombie W.R."/>
            <person name="Minx P."/>
            <person name="Cordum H."/>
            <person name="Wilson R."/>
            <person name="Jin W."/>
            <person name="Lee H.R."/>
            <person name="Jiang J."/>
            <person name="Jackson S."/>
        </authorList>
    </citation>
    <scope>NUCLEOTIDE SEQUENCE [LARGE SCALE GENOMIC DNA]</scope>
    <source>
        <strain>cv. Nipponbare</strain>
    </source>
</reference>
<reference key="2">
    <citation type="journal article" date="2005" name="Nature">
        <title>The map-based sequence of the rice genome.</title>
        <authorList>
            <consortium name="International rice genome sequencing project (IRGSP)"/>
        </authorList>
    </citation>
    <scope>NUCLEOTIDE SEQUENCE [LARGE SCALE GENOMIC DNA]</scope>
    <source>
        <strain>cv. Nipponbare</strain>
    </source>
</reference>
<reference key="3">
    <citation type="journal article" date="2008" name="Nucleic Acids Res.">
        <title>The rice annotation project database (RAP-DB): 2008 update.</title>
        <authorList>
            <consortium name="The rice annotation project (RAP)"/>
        </authorList>
    </citation>
    <scope>GENOME REANNOTATION</scope>
    <source>
        <strain>cv. Nipponbare</strain>
    </source>
</reference>
<reference key="4">
    <citation type="journal article" date="2013" name="Rice">
        <title>Improvement of the Oryza sativa Nipponbare reference genome using next generation sequence and optical map data.</title>
        <authorList>
            <person name="Kawahara Y."/>
            <person name="de la Bastide M."/>
            <person name="Hamilton J.P."/>
            <person name="Kanamori H."/>
            <person name="McCombie W.R."/>
            <person name="Ouyang S."/>
            <person name="Schwartz D.C."/>
            <person name="Tanaka T."/>
            <person name="Wu J."/>
            <person name="Zhou S."/>
            <person name="Childs K.L."/>
            <person name="Davidson R.M."/>
            <person name="Lin H."/>
            <person name="Quesada-Ocampo L."/>
            <person name="Vaillancourt B."/>
            <person name="Sakai H."/>
            <person name="Lee S.S."/>
            <person name="Kim J."/>
            <person name="Numa H."/>
            <person name="Itoh T."/>
            <person name="Buell C.R."/>
            <person name="Matsumoto T."/>
        </authorList>
    </citation>
    <scope>GENOME REANNOTATION</scope>
    <source>
        <strain>cv. Nipponbare</strain>
    </source>
</reference>
<reference key="5">
    <citation type="journal article" date="2005" name="PLoS Biol.">
        <title>The genomes of Oryza sativa: a history of duplications.</title>
        <authorList>
            <person name="Yu J."/>
            <person name="Wang J."/>
            <person name="Lin W."/>
            <person name="Li S."/>
            <person name="Li H."/>
            <person name="Zhou J."/>
            <person name="Ni P."/>
            <person name="Dong W."/>
            <person name="Hu S."/>
            <person name="Zeng C."/>
            <person name="Zhang J."/>
            <person name="Zhang Y."/>
            <person name="Li R."/>
            <person name="Xu Z."/>
            <person name="Li S."/>
            <person name="Li X."/>
            <person name="Zheng H."/>
            <person name="Cong L."/>
            <person name="Lin L."/>
            <person name="Yin J."/>
            <person name="Geng J."/>
            <person name="Li G."/>
            <person name="Shi J."/>
            <person name="Liu J."/>
            <person name="Lv H."/>
            <person name="Li J."/>
            <person name="Wang J."/>
            <person name="Deng Y."/>
            <person name="Ran L."/>
            <person name="Shi X."/>
            <person name="Wang X."/>
            <person name="Wu Q."/>
            <person name="Li C."/>
            <person name="Ren X."/>
            <person name="Wang J."/>
            <person name="Wang X."/>
            <person name="Li D."/>
            <person name="Liu D."/>
            <person name="Zhang X."/>
            <person name="Ji Z."/>
            <person name="Zhao W."/>
            <person name="Sun Y."/>
            <person name="Zhang Z."/>
            <person name="Bao J."/>
            <person name="Han Y."/>
            <person name="Dong L."/>
            <person name="Ji J."/>
            <person name="Chen P."/>
            <person name="Wu S."/>
            <person name="Liu J."/>
            <person name="Xiao Y."/>
            <person name="Bu D."/>
            <person name="Tan J."/>
            <person name="Yang L."/>
            <person name="Ye C."/>
            <person name="Zhang J."/>
            <person name="Xu J."/>
            <person name="Zhou Y."/>
            <person name="Yu Y."/>
            <person name="Zhang B."/>
            <person name="Zhuang S."/>
            <person name="Wei H."/>
            <person name="Liu B."/>
            <person name="Lei M."/>
            <person name="Yu H."/>
            <person name="Li Y."/>
            <person name="Xu H."/>
            <person name="Wei S."/>
            <person name="He X."/>
            <person name="Fang L."/>
            <person name="Zhang Z."/>
            <person name="Zhang Y."/>
            <person name="Huang X."/>
            <person name="Su Z."/>
            <person name="Tong W."/>
            <person name="Li J."/>
            <person name="Tong Z."/>
            <person name="Li S."/>
            <person name="Ye J."/>
            <person name="Wang L."/>
            <person name="Fang L."/>
            <person name="Lei T."/>
            <person name="Chen C.-S."/>
            <person name="Chen H.-C."/>
            <person name="Xu Z."/>
            <person name="Li H."/>
            <person name="Huang H."/>
            <person name="Zhang F."/>
            <person name="Xu H."/>
            <person name="Li N."/>
            <person name="Zhao C."/>
            <person name="Li S."/>
            <person name="Dong L."/>
            <person name="Huang Y."/>
            <person name="Li L."/>
            <person name="Xi Y."/>
            <person name="Qi Q."/>
            <person name="Li W."/>
            <person name="Zhang B."/>
            <person name="Hu W."/>
            <person name="Zhang Y."/>
            <person name="Tian X."/>
            <person name="Jiao Y."/>
            <person name="Liang X."/>
            <person name="Jin J."/>
            <person name="Gao L."/>
            <person name="Zheng W."/>
            <person name="Hao B."/>
            <person name="Liu S.-M."/>
            <person name="Wang W."/>
            <person name="Yuan L."/>
            <person name="Cao M."/>
            <person name="McDermott J."/>
            <person name="Samudrala R."/>
            <person name="Wang J."/>
            <person name="Wong G.K.-S."/>
            <person name="Yang H."/>
        </authorList>
    </citation>
    <scope>NUCLEOTIDE SEQUENCE [LARGE SCALE GENOMIC DNA]</scope>
    <source>
        <strain>cv. Nipponbare</strain>
    </source>
</reference>
<reference key="6">
    <citation type="journal article" date="2008" name="J. Integr. Plant Biol.">
        <title>Phylogenetic analysis of the plant-specific zinc finger-homeobox and mini zinc finger gene families.</title>
        <authorList>
            <person name="Hu W."/>
            <person name="dePamphilis C.W."/>
            <person name="Ma H."/>
        </authorList>
    </citation>
    <scope>GENE FAMILY</scope>
    <scope>NOMENCLATURE</scope>
</reference>
<evidence type="ECO:0000250" key="1"/>
<evidence type="ECO:0000255" key="2">
    <source>
        <dbReference type="PROSITE-ProRule" id="PRU00856"/>
    </source>
</evidence>
<evidence type="ECO:0000256" key="3">
    <source>
        <dbReference type="SAM" id="MobiDB-lite"/>
    </source>
</evidence>
<protein>
    <recommendedName>
        <fullName>Zinc-finger homeodomain protein 11</fullName>
        <shortName>OsZHD11</shortName>
    </recommendedName>
</protein>
<keyword id="KW-0238">DNA-binding</keyword>
<keyword id="KW-0371">Homeobox</keyword>
<keyword id="KW-0479">Metal-binding</keyword>
<keyword id="KW-0539">Nucleus</keyword>
<keyword id="KW-1185">Reference proteome</keyword>
<keyword id="KW-0804">Transcription</keyword>
<keyword id="KW-0805">Transcription regulation</keyword>
<keyword id="KW-0862">Zinc</keyword>
<keyword id="KW-0863">Zinc-finger</keyword>